<reference key="1">
    <citation type="journal article" date="1994" name="Plant Mol. Biol.">
        <title>Characterization of the tobacco eIF-4A gene family.</title>
        <authorList>
            <person name="Owttrim G.W."/>
            <person name="Mandel T."/>
            <person name="Trachsel H."/>
            <person name="Thomas A.A."/>
            <person name="Kuhlemeier C."/>
        </authorList>
    </citation>
    <scope>NUCLEOTIDE SEQUENCE [MRNA]</scope>
    <source>
        <strain>cv. SR1</strain>
    </source>
</reference>
<evidence type="ECO:0000250" key="1"/>
<evidence type="ECO:0000255" key="2">
    <source>
        <dbReference type="PROSITE-ProRule" id="PRU00541"/>
    </source>
</evidence>
<evidence type="ECO:0000255" key="3">
    <source>
        <dbReference type="PROSITE-ProRule" id="PRU00542"/>
    </source>
</evidence>
<evidence type="ECO:0000305" key="4"/>
<feature type="chain" id="PRO_0000054959" description="Eukaryotic initiation factor 4A-13">
    <location>
        <begin position="1"/>
        <end position="355" status="greater than"/>
    </location>
</feature>
<feature type="domain" description="Helicase ATP-binding" evidence="2">
    <location>
        <begin position="71"/>
        <end position="241"/>
    </location>
</feature>
<feature type="domain" description="Helicase C-terminal" evidence="3">
    <location>
        <begin position="252"/>
        <end position="355" status="greater than"/>
    </location>
</feature>
<feature type="short sequence motif" description="Q motif">
    <location>
        <begin position="40"/>
        <end position="68"/>
    </location>
</feature>
<feature type="short sequence motif" description="DEAD box">
    <location>
        <begin position="189"/>
        <end position="192"/>
    </location>
</feature>
<feature type="binding site" evidence="2">
    <location>
        <begin position="84"/>
        <end position="91"/>
    </location>
    <ligand>
        <name>ATP</name>
        <dbReference type="ChEBI" id="CHEBI:30616"/>
    </ligand>
</feature>
<feature type="non-terminal residue">
    <location>
        <position position="355"/>
    </location>
</feature>
<comment type="function">
    <text evidence="1">ATP-dependent RNA helicase which is a subunit of the eIF4F complex involved in cap recognition and is required for mRNA binding to ribosome. In the current model of translation initiation, eIF4A unwinds RNA secondary structures in the 5'-UTR of mRNAs which is necessary to allow efficient binding of the small ribosomal subunit, and subsequent scanning for the initiator codon (By similarity).</text>
</comment>
<comment type="catalytic activity">
    <reaction>
        <text>ATP + H2O = ADP + phosphate + H(+)</text>
        <dbReference type="Rhea" id="RHEA:13065"/>
        <dbReference type="ChEBI" id="CHEBI:15377"/>
        <dbReference type="ChEBI" id="CHEBI:15378"/>
        <dbReference type="ChEBI" id="CHEBI:30616"/>
        <dbReference type="ChEBI" id="CHEBI:43474"/>
        <dbReference type="ChEBI" id="CHEBI:456216"/>
        <dbReference type="EC" id="3.6.4.13"/>
    </reaction>
</comment>
<comment type="subunit">
    <text evidence="1">eIF4F is a multi-subunit complex, the composition of which varies with external and internal environmental conditions. It is composed of at least EIF4A, EIF4E and EIF4G (By similarity).</text>
</comment>
<comment type="similarity">
    <text evidence="4">Belongs to the DEAD box helicase family. eIF4A subfamily.</text>
</comment>
<keyword id="KW-0067">ATP-binding</keyword>
<keyword id="KW-0347">Helicase</keyword>
<keyword id="KW-0378">Hydrolase</keyword>
<keyword id="KW-0396">Initiation factor</keyword>
<keyword id="KW-0547">Nucleotide-binding</keyword>
<keyword id="KW-0648">Protein biosynthesis</keyword>
<keyword id="KW-1185">Reference proteome</keyword>
<keyword id="KW-0694">RNA-binding</keyword>
<sequence>MAGLAPEGSQFDARQYDAKMTELLGTEQEEFFTSYDEVYDSFDAMGLQENLLRGIYAYGFEKPSAIQQRGIVPFCKGLDVIQQAQSGTGKTATFCSGVLQQLDYSLVECQALVLAPTRELAQQIEKVMRALGDYLGVKVHACVGGTSVREDQRILQSGVHVVVGTPGRVFDMLRRQSLRPDHIKMFVLDEADEMLSRGFKDQIYDIFQLLPPKIQVGVFSATMPPEALEITRKFMNQPVRILVKRDDVTLEGIKQFYVNVDKEEWKLETLCDLYETLAITQSVIFVNTRRKVDWLTDKMRSRDHTVSATHGDMDQNTRDIIMREFRSGSSRVLITTDLLARGIDVQQVSLVINYD</sequence>
<protein>
    <recommendedName>
        <fullName>Eukaryotic initiation factor 4A-13</fullName>
        <shortName>eIF-4A-13</shortName>
        <ecNumber>3.6.4.13</ecNumber>
    </recommendedName>
    <alternativeName>
        <fullName>ATP-dependent RNA helicase eIF4A-13</fullName>
    </alternativeName>
</protein>
<proteinExistence type="evidence at transcript level"/>
<dbReference type="EC" id="3.6.4.13"/>
<dbReference type="EMBL" id="X79140">
    <property type="protein sequence ID" value="CAA55741.1"/>
    <property type="molecule type" value="mRNA"/>
</dbReference>
<dbReference type="PIR" id="S52022">
    <property type="entry name" value="S52022"/>
</dbReference>
<dbReference type="SMR" id="Q40466"/>
<dbReference type="STRING" id="4097.Q40466"/>
<dbReference type="PaxDb" id="4097-Q40466"/>
<dbReference type="Proteomes" id="UP000084051">
    <property type="component" value="Unplaced"/>
</dbReference>
<dbReference type="GO" id="GO:0010494">
    <property type="term" value="C:cytoplasmic stress granule"/>
    <property type="evidence" value="ECO:0000318"/>
    <property type="project" value="GO_Central"/>
</dbReference>
<dbReference type="GO" id="GO:0005524">
    <property type="term" value="F:ATP binding"/>
    <property type="evidence" value="ECO:0007669"/>
    <property type="project" value="UniProtKB-KW"/>
</dbReference>
<dbReference type="GO" id="GO:0016887">
    <property type="term" value="F:ATP hydrolysis activity"/>
    <property type="evidence" value="ECO:0007669"/>
    <property type="project" value="RHEA"/>
</dbReference>
<dbReference type="GO" id="GO:0003723">
    <property type="term" value="F:RNA binding"/>
    <property type="evidence" value="ECO:0007669"/>
    <property type="project" value="UniProtKB-KW"/>
</dbReference>
<dbReference type="GO" id="GO:0003724">
    <property type="term" value="F:RNA helicase activity"/>
    <property type="evidence" value="ECO:0007669"/>
    <property type="project" value="UniProtKB-EC"/>
</dbReference>
<dbReference type="GO" id="GO:0003743">
    <property type="term" value="F:translation initiation factor activity"/>
    <property type="evidence" value="ECO:0000318"/>
    <property type="project" value="GO_Central"/>
</dbReference>
<dbReference type="GO" id="GO:0002183">
    <property type="term" value="P:cytoplasmic translational initiation"/>
    <property type="evidence" value="ECO:0000318"/>
    <property type="project" value="GO_Central"/>
</dbReference>
<dbReference type="CDD" id="cd17939">
    <property type="entry name" value="DEADc_EIF4A"/>
    <property type="match status" value="1"/>
</dbReference>
<dbReference type="CDD" id="cd18787">
    <property type="entry name" value="SF2_C_DEAD"/>
    <property type="match status" value="1"/>
</dbReference>
<dbReference type="FunFam" id="3.40.50.300:FF:000089">
    <property type="entry name" value="Eukaryotic initiation factor 4A-II"/>
    <property type="match status" value="1"/>
</dbReference>
<dbReference type="Gene3D" id="3.40.50.300">
    <property type="entry name" value="P-loop containing nucleotide triphosphate hydrolases"/>
    <property type="match status" value="2"/>
</dbReference>
<dbReference type="InterPro" id="IPR011545">
    <property type="entry name" value="DEAD/DEAH_box_helicase_dom"/>
</dbReference>
<dbReference type="InterPro" id="IPR014001">
    <property type="entry name" value="Helicase_ATP-bd"/>
</dbReference>
<dbReference type="InterPro" id="IPR001650">
    <property type="entry name" value="Helicase_C-like"/>
</dbReference>
<dbReference type="InterPro" id="IPR027417">
    <property type="entry name" value="P-loop_NTPase"/>
</dbReference>
<dbReference type="InterPro" id="IPR000629">
    <property type="entry name" value="RNA-helicase_DEAD-box_CS"/>
</dbReference>
<dbReference type="InterPro" id="IPR014014">
    <property type="entry name" value="RNA_helicase_DEAD_Q_motif"/>
</dbReference>
<dbReference type="PANTHER" id="PTHR47958">
    <property type="entry name" value="ATP-DEPENDENT RNA HELICASE DBP3"/>
    <property type="match status" value="1"/>
</dbReference>
<dbReference type="Pfam" id="PF00270">
    <property type="entry name" value="DEAD"/>
    <property type="match status" value="1"/>
</dbReference>
<dbReference type="Pfam" id="PF00271">
    <property type="entry name" value="Helicase_C"/>
    <property type="match status" value="1"/>
</dbReference>
<dbReference type="SMART" id="SM00487">
    <property type="entry name" value="DEXDc"/>
    <property type="match status" value="1"/>
</dbReference>
<dbReference type="SMART" id="SM00490">
    <property type="entry name" value="HELICc"/>
    <property type="match status" value="1"/>
</dbReference>
<dbReference type="SUPFAM" id="SSF52540">
    <property type="entry name" value="P-loop containing nucleoside triphosphate hydrolases"/>
    <property type="match status" value="2"/>
</dbReference>
<dbReference type="PROSITE" id="PS00039">
    <property type="entry name" value="DEAD_ATP_HELICASE"/>
    <property type="match status" value="1"/>
</dbReference>
<dbReference type="PROSITE" id="PS51192">
    <property type="entry name" value="HELICASE_ATP_BIND_1"/>
    <property type="match status" value="1"/>
</dbReference>
<dbReference type="PROSITE" id="PS51194">
    <property type="entry name" value="HELICASE_CTER"/>
    <property type="match status" value="1"/>
</dbReference>
<dbReference type="PROSITE" id="PS51195">
    <property type="entry name" value="Q_MOTIF"/>
    <property type="match status" value="1"/>
</dbReference>
<organism>
    <name type="scientific">Nicotiana tabacum</name>
    <name type="common">Common tobacco</name>
    <dbReference type="NCBI Taxonomy" id="4097"/>
    <lineage>
        <taxon>Eukaryota</taxon>
        <taxon>Viridiplantae</taxon>
        <taxon>Streptophyta</taxon>
        <taxon>Embryophyta</taxon>
        <taxon>Tracheophyta</taxon>
        <taxon>Spermatophyta</taxon>
        <taxon>Magnoliopsida</taxon>
        <taxon>eudicotyledons</taxon>
        <taxon>Gunneridae</taxon>
        <taxon>Pentapetalae</taxon>
        <taxon>asterids</taxon>
        <taxon>lamiids</taxon>
        <taxon>Solanales</taxon>
        <taxon>Solanaceae</taxon>
        <taxon>Nicotianoideae</taxon>
        <taxon>Nicotianeae</taxon>
        <taxon>Nicotiana</taxon>
    </lineage>
</organism>
<accession>Q40466</accession>
<name>IF413_TOBAC</name>